<reference key="1">
    <citation type="journal article" date="2003" name="Proc. Natl. Acad. Sci. U.S.A.">
        <title>Complete genome sequence and analysis of Wolinella succinogenes.</title>
        <authorList>
            <person name="Baar C."/>
            <person name="Eppinger M."/>
            <person name="Raddatz G."/>
            <person name="Simon J."/>
            <person name="Lanz C."/>
            <person name="Klimmek O."/>
            <person name="Nandakumar R."/>
            <person name="Gross R."/>
            <person name="Rosinus A."/>
            <person name="Keller H."/>
            <person name="Jagtap P."/>
            <person name="Linke B."/>
            <person name="Meyer F."/>
            <person name="Lederer H."/>
            <person name="Schuster S.C."/>
        </authorList>
    </citation>
    <scope>NUCLEOTIDE SEQUENCE [LARGE SCALE GENOMIC DNA]</scope>
    <source>
        <strain>ATCC 29543 / DSM 1740 / CCUG 13145 / JCM 31913 / LMG 7466 / NCTC 11488 / FDC 602W</strain>
    </source>
</reference>
<keyword id="KW-0001">2Fe-2S</keyword>
<keyword id="KW-0028">Amino-acid biosynthesis</keyword>
<keyword id="KW-0100">Branched-chain amino acid biosynthesis</keyword>
<keyword id="KW-0408">Iron</keyword>
<keyword id="KW-0411">Iron-sulfur</keyword>
<keyword id="KW-0456">Lyase</keyword>
<keyword id="KW-0460">Magnesium</keyword>
<keyword id="KW-0479">Metal-binding</keyword>
<keyword id="KW-1185">Reference proteome</keyword>
<dbReference type="EC" id="4.2.1.9" evidence="1"/>
<dbReference type="EMBL" id="BX571657">
    <property type="protein sequence ID" value="CAE09294.1"/>
    <property type="molecule type" value="Genomic_DNA"/>
</dbReference>
<dbReference type="RefSeq" id="WP_011138094.1">
    <property type="nucleotide sequence ID" value="NC_005090.1"/>
</dbReference>
<dbReference type="SMR" id="Q7MAN4"/>
<dbReference type="STRING" id="273121.WS0130"/>
<dbReference type="KEGG" id="wsu:WS0130"/>
<dbReference type="eggNOG" id="COG0129">
    <property type="taxonomic scope" value="Bacteria"/>
</dbReference>
<dbReference type="HOGENOM" id="CLU_014271_4_2_7"/>
<dbReference type="UniPathway" id="UPA00047">
    <property type="reaction ID" value="UER00057"/>
</dbReference>
<dbReference type="UniPathway" id="UPA00049">
    <property type="reaction ID" value="UER00061"/>
</dbReference>
<dbReference type="Proteomes" id="UP000000422">
    <property type="component" value="Chromosome"/>
</dbReference>
<dbReference type="GO" id="GO:0005829">
    <property type="term" value="C:cytosol"/>
    <property type="evidence" value="ECO:0007669"/>
    <property type="project" value="TreeGrafter"/>
</dbReference>
<dbReference type="GO" id="GO:0051537">
    <property type="term" value="F:2 iron, 2 sulfur cluster binding"/>
    <property type="evidence" value="ECO:0007669"/>
    <property type="project" value="UniProtKB-UniRule"/>
</dbReference>
<dbReference type="GO" id="GO:0004160">
    <property type="term" value="F:dihydroxy-acid dehydratase activity"/>
    <property type="evidence" value="ECO:0007669"/>
    <property type="project" value="UniProtKB-UniRule"/>
</dbReference>
<dbReference type="GO" id="GO:0000287">
    <property type="term" value="F:magnesium ion binding"/>
    <property type="evidence" value="ECO:0007669"/>
    <property type="project" value="UniProtKB-UniRule"/>
</dbReference>
<dbReference type="GO" id="GO:0009097">
    <property type="term" value="P:isoleucine biosynthetic process"/>
    <property type="evidence" value="ECO:0007669"/>
    <property type="project" value="UniProtKB-UniRule"/>
</dbReference>
<dbReference type="GO" id="GO:0009099">
    <property type="term" value="P:L-valine biosynthetic process"/>
    <property type="evidence" value="ECO:0007669"/>
    <property type="project" value="UniProtKB-UniRule"/>
</dbReference>
<dbReference type="FunFam" id="3.50.30.80:FF:000001">
    <property type="entry name" value="Dihydroxy-acid dehydratase"/>
    <property type="match status" value="1"/>
</dbReference>
<dbReference type="Gene3D" id="3.50.30.80">
    <property type="entry name" value="IlvD/EDD C-terminal domain-like"/>
    <property type="match status" value="1"/>
</dbReference>
<dbReference type="HAMAP" id="MF_00012">
    <property type="entry name" value="IlvD"/>
    <property type="match status" value="1"/>
</dbReference>
<dbReference type="InterPro" id="IPR042096">
    <property type="entry name" value="Dihydro-acid_dehy_C"/>
</dbReference>
<dbReference type="InterPro" id="IPR004404">
    <property type="entry name" value="DihydroxyA_deHydtase"/>
</dbReference>
<dbReference type="InterPro" id="IPR020558">
    <property type="entry name" value="DiOHA_6PGluconate_deHydtase_CS"/>
</dbReference>
<dbReference type="InterPro" id="IPR056740">
    <property type="entry name" value="ILV_EDD_C"/>
</dbReference>
<dbReference type="InterPro" id="IPR000581">
    <property type="entry name" value="ILV_EDD_N"/>
</dbReference>
<dbReference type="InterPro" id="IPR037237">
    <property type="entry name" value="IlvD/EDD_N"/>
</dbReference>
<dbReference type="NCBIfam" id="TIGR00110">
    <property type="entry name" value="ilvD"/>
    <property type="match status" value="1"/>
</dbReference>
<dbReference type="NCBIfam" id="NF002068">
    <property type="entry name" value="PRK00911.1"/>
    <property type="match status" value="1"/>
</dbReference>
<dbReference type="PANTHER" id="PTHR43661">
    <property type="entry name" value="D-XYLONATE DEHYDRATASE"/>
    <property type="match status" value="1"/>
</dbReference>
<dbReference type="PANTHER" id="PTHR43661:SF3">
    <property type="entry name" value="D-XYLONATE DEHYDRATASE YAGF-RELATED"/>
    <property type="match status" value="1"/>
</dbReference>
<dbReference type="Pfam" id="PF24877">
    <property type="entry name" value="ILV_EDD_C"/>
    <property type="match status" value="1"/>
</dbReference>
<dbReference type="Pfam" id="PF00920">
    <property type="entry name" value="ILVD_EDD_N"/>
    <property type="match status" value="1"/>
</dbReference>
<dbReference type="SUPFAM" id="SSF143975">
    <property type="entry name" value="IlvD/EDD N-terminal domain-like"/>
    <property type="match status" value="1"/>
</dbReference>
<dbReference type="SUPFAM" id="SSF52016">
    <property type="entry name" value="LeuD/IlvD-like"/>
    <property type="match status" value="1"/>
</dbReference>
<dbReference type="PROSITE" id="PS00886">
    <property type="entry name" value="ILVD_EDD_1"/>
    <property type="match status" value="1"/>
</dbReference>
<dbReference type="PROSITE" id="PS00887">
    <property type="entry name" value="ILVD_EDD_2"/>
    <property type="match status" value="1"/>
</dbReference>
<sequence length="559" mass="60108">MRSSIIKEGYQKAPHRSLLRATGLKDEDFGKPFIGVANSYIDIIPGHFFLQEYGRIIKEEIRAAGGIPFEFNTIGVDDGIAMGHDGMLYSLPSRELIADCIETVMNAHKLDAMICIPNCDKIVPGMLLGALRVNVPTVFVSGGPMKAGRLKDGTKVDLASAFEAVGKRARNQISDEELREIECAACPGGGSCSGMFTANSMNTLCEAMGVALPGNGTIPALTKEREELIRKAARRIVEIALDERYAFRNILNKEAIHNAFVVDMAMGGSTNTVLHMMAIAKEREADFDLRKINEIAKEVSHIAKISPALYTVHMEDINRAGGVNAVMNEINRRGGVLKTEALTVSGESMGERIAGAKILDTQIIHTLENPYSAVGGLKILYGNLAEQGAVLKTAAMDAKMRKFTGKAVCFDSQEEAIAGIVGGKVKEGDVVVIRYEGPKGGPGMQEMLSPTSLIMGMNLGDKVALITDGRFSGATRGACIGHVSPEAAEGGMIGLLQEGDLIRIDVEEGVLEVLLEEAEIQKRRASFSPKTKTVASKWLKRYQLLVSNAASGAILKTEL</sequence>
<proteinExistence type="inferred from homology"/>
<gene>
    <name evidence="1" type="primary">ilvD</name>
    <name type="ordered locus">WS0130</name>
</gene>
<feature type="chain" id="PRO_0000103530" description="Dihydroxy-acid dehydratase">
    <location>
        <begin position="1"/>
        <end position="559"/>
    </location>
</feature>
<feature type="active site" description="Proton acceptor" evidence="1">
    <location>
        <position position="472"/>
    </location>
</feature>
<feature type="binding site" evidence="1">
    <location>
        <position position="78"/>
    </location>
    <ligand>
        <name>Mg(2+)</name>
        <dbReference type="ChEBI" id="CHEBI:18420"/>
    </ligand>
</feature>
<feature type="binding site" evidence="1">
    <location>
        <position position="119"/>
    </location>
    <ligand>
        <name>[2Fe-2S] cluster</name>
        <dbReference type="ChEBI" id="CHEBI:190135"/>
    </ligand>
</feature>
<feature type="binding site" evidence="1">
    <location>
        <position position="120"/>
    </location>
    <ligand>
        <name>Mg(2+)</name>
        <dbReference type="ChEBI" id="CHEBI:18420"/>
    </ligand>
</feature>
<feature type="binding site" description="via carbamate group" evidence="1">
    <location>
        <position position="121"/>
    </location>
    <ligand>
        <name>Mg(2+)</name>
        <dbReference type="ChEBI" id="CHEBI:18420"/>
    </ligand>
</feature>
<feature type="binding site" evidence="1">
    <location>
        <position position="192"/>
    </location>
    <ligand>
        <name>[2Fe-2S] cluster</name>
        <dbReference type="ChEBI" id="CHEBI:190135"/>
    </ligand>
</feature>
<feature type="binding site" evidence="1">
    <location>
        <position position="446"/>
    </location>
    <ligand>
        <name>Mg(2+)</name>
        <dbReference type="ChEBI" id="CHEBI:18420"/>
    </ligand>
</feature>
<feature type="modified residue" description="N6-carboxylysine" evidence="1">
    <location>
        <position position="121"/>
    </location>
</feature>
<organism>
    <name type="scientific">Wolinella succinogenes (strain ATCC 29543 / DSM 1740 / CCUG 13145 / JCM 31913 / LMG 7466 / NCTC 11488 / FDC 602W)</name>
    <name type="common">Vibrio succinogenes</name>
    <dbReference type="NCBI Taxonomy" id="273121"/>
    <lineage>
        <taxon>Bacteria</taxon>
        <taxon>Pseudomonadati</taxon>
        <taxon>Campylobacterota</taxon>
        <taxon>Epsilonproteobacteria</taxon>
        <taxon>Campylobacterales</taxon>
        <taxon>Helicobacteraceae</taxon>
        <taxon>Wolinella</taxon>
    </lineage>
</organism>
<evidence type="ECO:0000255" key="1">
    <source>
        <dbReference type="HAMAP-Rule" id="MF_00012"/>
    </source>
</evidence>
<name>ILVD_WOLSU</name>
<accession>Q7MAN4</accession>
<protein>
    <recommendedName>
        <fullName evidence="1">Dihydroxy-acid dehydratase</fullName>
        <shortName evidence="1">DAD</shortName>
        <ecNumber evidence="1">4.2.1.9</ecNumber>
    </recommendedName>
</protein>
<comment type="function">
    <text evidence="1">Functions in the biosynthesis of branched-chain amino acids. Catalyzes the dehydration of (2R,3R)-2,3-dihydroxy-3-methylpentanoate (2,3-dihydroxy-3-methylvalerate) into 2-oxo-3-methylpentanoate (2-oxo-3-methylvalerate) and of (2R)-2,3-dihydroxy-3-methylbutanoate (2,3-dihydroxyisovalerate) into 2-oxo-3-methylbutanoate (2-oxoisovalerate), the penultimate precursor to L-isoleucine and L-valine, respectively.</text>
</comment>
<comment type="catalytic activity">
    <reaction evidence="1">
        <text>(2R)-2,3-dihydroxy-3-methylbutanoate = 3-methyl-2-oxobutanoate + H2O</text>
        <dbReference type="Rhea" id="RHEA:24809"/>
        <dbReference type="ChEBI" id="CHEBI:11851"/>
        <dbReference type="ChEBI" id="CHEBI:15377"/>
        <dbReference type="ChEBI" id="CHEBI:49072"/>
        <dbReference type="EC" id="4.2.1.9"/>
    </reaction>
    <physiologicalReaction direction="left-to-right" evidence="1">
        <dbReference type="Rhea" id="RHEA:24810"/>
    </physiologicalReaction>
</comment>
<comment type="catalytic activity">
    <reaction evidence="1">
        <text>(2R,3R)-2,3-dihydroxy-3-methylpentanoate = (S)-3-methyl-2-oxopentanoate + H2O</text>
        <dbReference type="Rhea" id="RHEA:27694"/>
        <dbReference type="ChEBI" id="CHEBI:15377"/>
        <dbReference type="ChEBI" id="CHEBI:35146"/>
        <dbReference type="ChEBI" id="CHEBI:49258"/>
        <dbReference type="EC" id="4.2.1.9"/>
    </reaction>
    <physiologicalReaction direction="left-to-right" evidence="1">
        <dbReference type="Rhea" id="RHEA:27695"/>
    </physiologicalReaction>
</comment>
<comment type="cofactor">
    <cofactor evidence="1">
        <name>[2Fe-2S] cluster</name>
        <dbReference type="ChEBI" id="CHEBI:190135"/>
    </cofactor>
    <text evidence="1">Binds 1 [2Fe-2S] cluster per subunit. This cluster acts as a Lewis acid cofactor.</text>
</comment>
<comment type="cofactor">
    <cofactor evidence="1">
        <name>Mg(2+)</name>
        <dbReference type="ChEBI" id="CHEBI:18420"/>
    </cofactor>
</comment>
<comment type="pathway">
    <text evidence="1">Amino-acid biosynthesis; L-isoleucine biosynthesis; L-isoleucine from 2-oxobutanoate: step 3/4.</text>
</comment>
<comment type="pathway">
    <text evidence="1">Amino-acid biosynthesis; L-valine biosynthesis; L-valine from pyruvate: step 3/4.</text>
</comment>
<comment type="subunit">
    <text evidence="1">Homodimer.</text>
</comment>
<comment type="similarity">
    <text evidence="1">Belongs to the IlvD/Edd family.</text>
</comment>